<proteinExistence type="inferred from homology"/>
<dbReference type="EC" id="3.2.1.51"/>
<dbReference type="EMBL" id="AM270362">
    <property type="protein sequence ID" value="CAK48586.1"/>
    <property type="molecule type" value="Genomic_DNA"/>
</dbReference>
<dbReference type="SMR" id="A2R797"/>
<dbReference type="CAZy" id="GH95">
    <property type="family name" value="Glycoside Hydrolase Family 95"/>
</dbReference>
<dbReference type="GlyCosmos" id="A2R797">
    <property type="glycosylation" value="13 sites, No reported glycans"/>
</dbReference>
<dbReference type="EnsemblFungi" id="CAK48586">
    <property type="protein sequence ID" value="CAK48586"/>
    <property type="gene ID" value="An16g02760"/>
</dbReference>
<dbReference type="VEuPathDB" id="FungiDB:An16g02760"/>
<dbReference type="HOGENOM" id="CLU_004617_2_2_1"/>
<dbReference type="Proteomes" id="UP000006706">
    <property type="component" value="Chromosome 5R"/>
</dbReference>
<dbReference type="GO" id="GO:0005576">
    <property type="term" value="C:extracellular region"/>
    <property type="evidence" value="ECO:0007669"/>
    <property type="project" value="UniProtKB-SubCell"/>
</dbReference>
<dbReference type="GO" id="GO:0004560">
    <property type="term" value="F:alpha-L-fucosidase activity"/>
    <property type="evidence" value="ECO:0007669"/>
    <property type="project" value="UniProtKB-EC"/>
</dbReference>
<dbReference type="GO" id="GO:0000272">
    <property type="term" value="P:polysaccharide catabolic process"/>
    <property type="evidence" value="ECO:0007669"/>
    <property type="project" value="UniProtKB-KW"/>
</dbReference>
<dbReference type="Gene3D" id="1.50.10.10">
    <property type="match status" value="1"/>
</dbReference>
<dbReference type="InterPro" id="IPR008928">
    <property type="entry name" value="6-hairpin_glycosidase_sf"/>
</dbReference>
<dbReference type="InterPro" id="IPR012341">
    <property type="entry name" value="6hp_glycosidase-like_sf"/>
</dbReference>
<dbReference type="InterPro" id="IPR016518">
    <property type="entry name" value="Alpha-L-fucosidase"/>
</dbReference>
<dbReference type="InterPro" id="IPR054363">
    <property type="entry name" value="GH95_cat"/>
</dbReference>
<dbReference type="InterPro" id="IPR027414">
    <property type="entry name" value="GH95_N_dom"/>
</dbReference>
<dbReference type="PANTHER" id="PTHR31084:SF3">
    <property type="entry name" value="ALPHA-FUCOSIDASE A"/>
    <property type="match status" value="1"/>
</dbReference>
<dbReference type="PANTHER" id="PTHR31084">
    <property type="entry name" value="ALPHA-L-FUCOSIDASE 2"/>
    <property type="match status" value="1"/>
</dbReference>
<dbReference type="Pfam" id="PF14498">
    <property type="entry name" value="Glyco_hyd_65N_2"/>
    <property type="match status" value="1"/>
</dbReference>
<dbReference type="Pfam" id="PF22124">
    <property type="entry name" value="Glyco_hydro_95_cat"/>
    <property type="match status" value="1"/>
</dbReference>
<dbReference type="PIRSF" id="PIRSF007663">
    <property type="entry name" value="UCP007663"/>
    <property type="match status" value="1"/>
</dbReference>
<dbReference type="SUPFAM" id="SSF48208">
    <property type="entry name" value="Six-hairpin glycosidases"/>
    <property type="match status" value="1"/>
</dbReference>
<feature type="signal peptide" evidence="2">
    <location>
        <begin position="1"/>
        <end position="20"/>
    </location>
</feature>
<feature type="chain" id="PRO_5000221152" description="Probable alpha-fucosidase A">
    <location>
        <begin position="21"/>
        <end position="793"/>
    </location>
</feature>
<feature type="glycosylation site" description="N-linked (GlcNAc...) asparagine" evidence="2">
    <location>
        <position position="30"/>
    </location>
</feature>
<feature type="glycosylation site" description="N-linked (GlcNAc...) asparagine" evidence="2">
    <location>
        <position position="83"/>
    </location>
</feature>
<feature type="glycosylation site" description="N-linked (GlcNAc...) asparagine" evidence="2">
    <location>
        <position position="100"/>
    </location>
</feature>
<feature type="glycosylation site" description="N-linked (GlcNAc...) asparagine" evidence="2">
    <location>
        <position position="104"/>
    </location>
</feature>
<feature type="glycosylation site" description="N-linked (GlcNAc...) asparagine" evidence="2">
    <location>
        <position position="123"/>
    </location>
</feature>
<feature type="glycosylation site" description="N-linked (GlcNAc...) asparagine" evidence="2">
    <location>
        <position position="179"/>
    </location>
</feature>
<feature type="glycosylation site" description="N-linked (GlcNAc...) asparagine" evidence="2">
    <location>
        <position position="199"/>
    </location>
</feature>
<feature type="glycosylation site" description="N-linked (GlcNAc...) asparagine" evidence="2">
    <location>
        <position position="234"/>
    </location>
</feature>
<feature type="glycosylation site" description="N-linked (GlcNAc...) asparagine" evidence="2">
    <location>
        <position position="323"/>
    </location>
</feature>
<feature type="glycosylation site" description="N-linked (GlcNAc...) asparagine" evidence="2">
    <location>
        <position position="597"/>
    </location>
</feature>
<feature type="glycosylation site" description="N-linked (GlcNAc...) asparagine" evidence="2">
    <location>
        <position position="622"/>
    </location>
</feature>
<feature type="glycosylation site" description="N-linked (GlcNAc...) asparagine" evidence="2">
    <location>
        <position position="660"/>
    </location>
</feature>
<feature type="glycosylation site" description="N-linked (GlcNAc...) asparagine" evidence="2">
    <location>
        <position position="757"/>
    </location>
</feature>
<sequence length="793" mass="86565">MLISGSSAALCALALPFAAAKSLWSDSPGNYSSFITTAFPLGNGRLGAMPIGSYDKEIVNLNVDSLWRGGPFESPTYSGGNPNVSKAGALPGIREWIFQNGTGNVSALLGEYPYYGSYQVLANLTIDMGELSDIDGYRRNLDLDSAVYSDHFSTGETYIEREAFCSYPDNVCVYRLSSNSSLPEITFGLENQLTSPAPNVSCHGNSISLYGQTYPVIGMIYNARVTVVVPGSSNTTDLCSSSTVKVPEGEKEVFLVFAADTNYEASNGNSKASFSFKGENPYMKVLQTATNAAKKSYSALKSSHVKDYQGVFNKFTLTLPDPNGSADRPTTELLSSYSQPGDPYVENLLFDYGRYLFISSSRPGSLPPNLQGLWTESYSPAWSGDYHANINLQMNHWAVDQTGLGELTEPLWTYMAETWMPRGAETAELLYGTSEGWVTHDEMNTFGHTAMKDVAQWADYPATNAWMSHHVWDHFDYSQDSAWYRETGYPILKGAAQFWLSQLVKDEYFKDGTLVVNPCNSPEHGPTLTPQTFGCTHYQQLIWELFDHVLQGWTASGDDDTSFKNAITSKFSTLDPGIHIGSWGQIQEWKLDIDVKNDTHRHLSNLYGWYPGYIISSVHGSNKTITDAVETTLYSRGTGVEDSNTGWAKVWRSACWALLNVTDEAYSELSLAIQDNFAENGFDMYSGSPPFQIDANFGLVGAMVQMLIRDSDRSSADASAGKTQDVLLGPAIPAAWGGGSVGGLRLRGGGVVSFSWNDSGVVDSCKADLSARGSDVSQVKFYVAGGRAIDCSS</sequence>
<evidence type="ECO:0000250" key="1"/>
<evidence type="ECO:0000255" key="2"/>
<evidence type="ECO:0000305" key="3"/>
<gene>
    <name type="primary">afcA</name>
    <name type="ORF">An16g02760</name>
</gene>
<keyword id="KW-0119">Carbohydrate metabolism</keyword>
<keyword id="KW-0325">Glycoprotein</keyword>
<keyword id="KW-0326">Glycosidase</keyword>
<keyword id="KW-0378">Hydrolase</keyword>
<keyword id="KW-0624">Polysaccharide degradation</keyword>
<keyword id="KW-1185">Reference proteome</keyword>
<keyword id="KW-0964">Secreted</keyword>
<keyword id="KW-0732">Signal</keyword>
<comment type="function">
    <text evidence="1">Alpha-fucosidase involved in degradation of fucosylated xyloglucans. Hydrolyzes alpha-1,2-linked fucose (By similarity).</text>
</comment>
<comment type="catalytic activity">
    <reaction>
        <text>an alpha-L-fucoside + H2O = L-fucose + an alcohol</text>
        <dbReference type="Rhea" id="RHEA:12288"/>
        <dbReference type="ChEBI" id="CHEBI:2181"/>
        <dbReference type="ChEBI" id="CHEBI:15377"/>
        <dbReference type="ChEBI" id="CHEBI:28349"/>
        <dbReference type="ChEBI" id="CHEBI:30879"/>
        <dbReference type="EC" id="3.2.1.51"/>
    </reaction>
</comment>
<comment type="subcellular location">
    <subcellularLocation>
        <location evidence="1">Secreted</location>
    </subcellularLocation>
</comment>
<comment type="similarity">
    <text evidence="3">Belongs to the glycosyl hydrolase 95 family.</text>
</comment>
<reference key="1">
    <citation type="journal article" date="2007" name="Nat. Biotechnol.">
        <title>Genome sequencing and analysis of the versatile cell factory Aspergillus niger CBS 513.88.</title>
        <authorList>
            <person name="Pel H.J."/>
            <person name="de Winde J.H."/>
            <person name="Archer D.B."/>
            <person name="Dyer P.S."/>
            <person name="Hofmann G."/>
            <person name="Schaap P.J."/>
            <person name="Turner G."/>
            <person name="de Vries R.P."/>
            <person name="Albang R."/>
            <person name="Albermann K."/>
            <person name="Andersen M.R."/>
            <person name="Bendtsen J.D."/>
            <person name="Benen J.A.E."/>
            <person name="van den Berg M."/>
            <person name="Breestraat S."/>
            <person name="Caddick M.X."/>
            <person name="Contreras R."/>
            <person name="Cornell M."/>
            <person name="Coutinho P.M."/>
            <person name="Danchin E.G.J."/>
            <person name="Debets A.J.M."/>
            <person name="Dekker P."/>
            <person name="van Dijck P.W.M."/>
            <person name="van Dijk A."/>
            <person name="Dijkhuizen L."/>
            <person name="Driessen A.J.M."/>
            <person name="d'Enfert C."/>
            <person name="Geysens S."/>
            <person name="Goosen C."/>
            <person name="Groot G.S.P."/>
            <person name="de Groot P.W.J."/>
            <person name="Guillemette T."/>
            <person name="Henrissat B."/>
            <person name="Herweijer M."/>
            <person name="van den Hombergh J.P.T.W."/>
            <person name="van den Hondel C.A.M.J.J."/>
            <person name="van der Heijden R.T.J.M."/>
            <person name="van der Kaaij R.M."/>
            <person name="Klis F.M."/>
            <person name="Kools H.J."/>
            <person name="Kubicek C.P."/>
            <person name="van Kuyk P.A."/>
            <person name="Lauber J."/>
            <person name="Lu X."/>
            <person name="van der Maarel M.J.E.C."/>
            <person name="Meulenberg R."/>
            <person name="Menke H."/>
            <person name="Mortimer M.A."/>
            <person name="Nielsen J."/>
            <person name="Oliver S.G."/>
            <person name="Olsthoorn M."/>
            <person name="Pal K."/>
            <person name="van Peij N.N.M.E."/>
            <person name="Ram A.F.J."/>
            <person name="Rinas U."/>
            <person name="Roubos J.A."/>
            <person name="Sagt C.M.J."/>
            <person name="Schmoll M."/>
            <person name="Sun J."/>
            <person name="Ussery D."/>
            <person name="Varga J."/>
            <person name="Vervecken W."/>
            <person name="van de Vondervoort P.J.J."/>
            <person name="Wedler H."/>
            <person name="Woesten H.A.B."/>
            <person name="Zeng A.-P."/>
            <person name="van Ooyen A.J.J."/>
            <person name="Visser J."/>
            <person name="Stam H."/>
        </authorList>
    </citation>
    <scope>NUCLEOTIDE SEQUENCE [LARGE SCALE GENOMIC DNA]</scope>
    <source>
        <strain>ATCC MYA-4892 / CBS 513.88 / FGSC A1513</strain>
    </source>
</reference>
<name>AFCA_ASPNC</name>
<organism>
    <name type="scientific">Aspergillus niger (strain ATCC MYA-4892 / CBS 513.88 / FGSC A1513)</name>
    <dbReference type="NCBI Taxonomy" id="425011"/>
    <lineage>
        <taxon>Eukaryota</taxon>
        <taxon>Fungi</taxon>
        <taxon>Dikarya</taxon>
        <taxon>Ascomycota</taxon>
        <taxon>Pezizomycotina</taxon>
        <taxon>Eurotiomycetes</taxon>
        <taxon>Eurotiomycetidae</taxon>
        <taxon>Eurotiales</taxon>
        <taxon>Aspergillaceae</taxon>
        <taxon>Aspergillus</taxon>
        <taxon>Aspergillus subgen. Circumdati</taxon>
    </lineage>
</organism>
<protein>
    <recommendedName>
        <fullName>Probable alpha-fucosidase A</fullName>
        <ecNumber>3.2.1.51</ecNumber>
    </recommendedName>
    <alternativeName>
        <fullName>Alpha-L-fucoside fucohydrolase A</fullName>
    </alternativeName>
</protein>
<accession>A2R797</accession>